<sequence length="348" mass="39566">MARFNAAFTRIKIMFSRIRGLISCQSNTQTIAPTLSPPSSGHVSFAGIDYPLLPLNHQTPLVFQWFERNPDRFGQNEIPIINTQKNPYLNNIINAAIIEKERIIGIFVDGDFSKGQRKALGKLEQNYRNIKVIYNSDLNYSMYDKKLTTIYLENITKLEAQSASERDEVLLNGVKKSLEDVLKNNPEETLISSHNKDKGHLWFDFYRNLFLLKGSDAFLEAGKPGCHHLQPGGGCIYLDADMLLTDKLGTLYLPDGIAIHVSRKDNHVSLENGIIAVNRSEHPALIKGLEIMHSKPYGDPYNDWLSKGLRHYFDGSHIQDYDAFCDFIEFKHENIIMNTSSLTASSWR</sequence>
<protein>
    <recommendedName>
        <fullName evidence="8">Protein-arginine N-acetylglucosaminyltransferase SseK2</fullName>
        <shortName evidence="8">Arginine GlcNAcyltransferase SseK2</shortName>
        <ecNumber evidence="2 10">2.4.1.-</ecNumber>
    </recommendedName>
    <alternativeName>
        <fullName evidence="7">Salmonella secreted effector K2</fullName>
    </alternativeName>
</protein>
<dbReference type="EC" id="2.4.1.-" evidence="2 10"/>
<dbReference type="EMBL" id="FQ312003">
    <property type="protein sequence ID" value="CBW18209.1"/>
    <property type="molecule type" value="Genomic_DNA"/>
</dbReference>
<dbReference type="RefSeq" id="WP_010989041.1">
    <property type="nucleotide sequence ID" value="NZ_QASL01000003.1"/>
</dbReference>
<dbReference type="PDB" id="5H61">
    <property type="method" value="X-ray"/>
    <property type="resolution" value="1.86 A"/>
    <property type="chains" value="A/B=1-348"/>
</dbReference>
<dbReference type="PDB" id="5H62">
    <property type="method" value="X-ray"/>
    <property type="resolution" value="1.66 A"/>
    <property type="chains" value="A/B=1-348"/>
</dbReference>
<dbReference type="PDB" id="5H63">
    <property type="method" value="X-ray"/>
    <property type="resolution" value="1.92 A"/>
    <property type="chains" value="A/B/C/D=1-348"/>
</dbReference>
<dbReference type="PDBsum" id="5H61"/>
<dbReference type="PDBsum" id="5H62"/>
<dbReference type="PDBsum" id="5H63"/>
<dbReference type="SMR" id="P0DUJ8"/>
<dbReference type="KEGG" id="sey:SL1344_2113"/>
<dbReference type="Proteomes" id="UP000008962">
    <property type="component" value="Chromosome"/>
</dbReference>
<dbReference type="GO" id="GO:0005576">
    <property type="term" value="C:extracellular region"/>
    <property type="evidence" value="ECO:0007669"/>
    <property type="project" value="UniProtKB-SubCell"/>
</dbReference>
<dbReference type="GO" id="GO:0044177">
    <property type="term" value="C:host cell Golgi apparatus"/>
    <property type="evidence" value="ECO:0000314"/>
    <property type="project" value="UniProtKB"/>
</dbReference>
<dbReference type="GO" id="GO:0030145">
    <property type="term" value="F:manganese ion binding"/>
    <property type="evidence" value="ECO:0000314"/>
    <property type="project" value="UniProtKB"/>
</dbReference>
<dbReference type="GO" id="GO:0106362">
    <property type="term" value="F:protein-arginine N-acetylglucosaminyltransferase activity"/>
    <property type="evidence" value="ECO:0000314"/>
    <property type="project" value="UniProtKB"/>
</dbReference>
<dbReference type="GO" id="GO:0090729">
    <property type="term" value="F:toxin activity"/>
    <property type="evidence" value="ECO:0007669"/>
    <property type="project" value="UniProtKB-KW"/>
</dbReference>
<dbReference type="NCBIfam" id="NF011910">
    <property type="entry name" value="PRK15383.1"/>
    <property type="match status" value="1"/>
</dbReference>
<dbReference type="Pfam" id="PF24688">
    <property type="entry name" value="SseK_NleB"/>
    <property type="match status" value="1"/>
</dbReference>
<name>SSEK2_SALTS</name>
<organism>
    <name type="scientific">Salmonella typhimurium (strain SL1344)</name>
    <dbReference type="NCBI Taxonomy" id="216597"/>
    <lineage>
        <taxon>Bacteria</taxon>
        <taxon>Pseudomonadati</taxon>
        <taxon>Pseudomonadota</taxon>
        <taxon>Gammaproteobacteria</taxon>
        <taxon>Enterobacterales</taxon>
        <taxon>Enterobacteriaceae</taxon>
        <taxon>Salmonella</taxon>
    </lineage>
</organism>
<proteinExistence type="evidence at protein level"/>
<keyword id="KW-0002">3D-structure</keyword>
<keyword id="KW-0328">Glycosyltransferase</keyword>
<keyword id="KW-1040">Host Golgi apparatus</keyword>
<keyword id="KW-0464">Manganese</keyword>
<keyword id="KW-0479">Metal-binding</keyword>
<keyword id="KW-0964">Secreted</keyword>
<keyword id="KW-0800">Toxin</keyword>
<keyword id="KW-0808">Transferase</keyword>
<keyword id="KW-0843">Virulence</keyword>
<gene>
    <name evidence="7" type="primary">sseK2</name>
    <name evidence="11" type="ordered locus">SL1344_2113</name>
</gene>
<reference key="1">
    <citation type="journal article" date="2012" name="Proc. Natl. Acad. Sci. U.S.A.">
        <title>The transcriptional landscape and small RNAs of Salmonella enterica serovar Typhimurium.</title>
        <authorList>
            <person name="Kroger C."/>
            <person name="Dillon S.C."/>
            <person name="Cameron A.D."/>
            <person name="Papenfort K."/>
            <person name="Sivasankaran S.K."/>
            <person name="Hokamp K."/>
            <person name="Chao Y."/>
            <person name="Sittka A."/>
            <person name="Hebrard M."/>
            <person name="Handler K."/>
            <person name="Colgan A."/>
            <person name="Leekitcharoenphon P."/>
            <person name="Langridge G.C."/>
            <person name="Lohan A.J."/>
            <person name="Loftus B."/>
            <person name="Lucchini S."/>
            <person name="Ussery D.W."/>
            <person name="Dorman C.J."/>
            <person name="Thomson N.R."/>
            <person name="Vogel J."/>
            <person name="Hinton J.C."/>
        </authorList>
    </citation>
    <scope>NUCLEOTIDE SEQUENCE [LARGE SCALE GENOMIC DNA]</scope>
    <source>
        <strain>SL1344</strain>
    </source>
</reference>
<reference key="2">
    <citation type="journal article" date="2018" name="BMB Rep.">
        <title>Structural insights showing how arginine is able to be glycosylated by pathogenic effector proteins.</title>
        <authorList>
            <person name="Park J.B."/>
            <person name="Yoo Y."/>
            <person name="Cho H.S."/>
        </authorList>
    </citation>
    <scope>DOMAIN</scope>
    <source>
        <strain>SL1344</strain>
    </source>
</reference>
<reference key="3">
    <citation type="journal article" date="2019" name="BMC Microbiol.">
        <title>The impact of sseK2 deletion on Salmonella enterica serovar typhimurium virulence in vivo and in vitro.</title>
        <authorList>
            <person name="Zhang X."/>
            <person name="He L."/>
            <person name="Zhang C."/>
            <person name="Yu C."/>
            <person name="Yang Y."/>
            <person name="Jia Y."/>
            <person name="Cheng X."/>
            <person name="Li Y."/>
            <person name="Liao C."/>
            <person name="Li J."/>
            <person name="Yu Z."/>
            <person name="Du F."/>
        </authorList>
    </citation>
    <scope>DISRUPTION PHENOTYPE</scope>
    <source>
        <strain>SL1344</strain>
    </source>
</reference>
<reference key="4">
    <citation type="journal article" date="2020" name="Front. Cell. Infect. Microbiol.">
        <title>Auto arginine-GlcNAcylation is crucial for bacterial pathogens in regulating host cell death.</title>
        <authorList>
            <person name="Xue J."/>
            <person name="Pan X."/>
            <person name="Peng T."/>
            <person name="Duan M."/>
            <person name="Du L."/>
            <person name="Zhuang X."/>
            <person name="Cai X."/>
            <person name="Yi X."/>
            <person name="Fu Y."/>
            <person name="Li S."/>
        </authorList>
    </citation>
    <scope>SUBCELLULAR LOCATION</scope>
    <source>
        <strain>SL1344</strain>
    </source>
</reference>
<reference key="5">
    <citation type="journal article" date="2020" name="Front. Cell. Infect. Microbiol.">
        <title>The Salmonella effector SseK3 targets small Rab GTPases.</title>
        <authorList>
            <person name="Gan J."/>
            <person name="Scott N.E."/>
            <person name="Newson J.P.M."/>
            <person name="Wibawa R.R."/>
            <person name="Wong Fok Lung T."/>
            <person name="Pollock G.L."/>
            <person name="Ng G.Z."/>
            <person name="van Driel I."/>
            <person name="Pearson J.S."/>
            <person name="Hartland E.L."/>
            <person name="Giogha C."/>
        </authorList>
    </citation>
    <scope>FUNCTION</scope>
    <scope>CATALYTIC ACTIVITY</scope>
    <scope>SUBCELLULAR LOCATION</scope>
    <scope>MUTAGENESIS OF 239-ASP--ASP-241</scope>
    <source>
        <strain>SL1344</strain>
    </source>
</reference>
<reference evidence="12 13 14" key="6">
    <citation type="journal article" date="2018" name="Nat. Commun.">
        <title>Structural basis for arginine glycosylation of host substrates by bacterial effector proteins.</title>
        <authorList>
            <person name="Park J.B."/>
            <person name="Kim Y.H."/>
            <person name="Yoo Y."/>
            <person name="Kim J."/>
            <person name="Jun S.H."/>
            <person name="Cho J.W."/>
            <person name="El Qaidi S."/>
            <person name="Walpole S."/>
            <person name="Monaco S."/>
            <person name="Garcia-Garcia A.A."/>
            <person name="Wu M."/>
            <person name="Hays M.P."/>
            <person name="Hurtado-Guerrero R."/>
            <person name="Angulo J."/>
            <person name="Hardwidge P.R."/>
            <person name="Shin J.S."/>
            <person name="Cho H.S."/>
        </authorList>
    </citation>
    <scope>X-RAY CRYSTALLOGRAPHY (1.66 ANGSTROMS) IN COMPLEX WITH URIDINE-5'-DIPHOSPHATE AND MANGANESE</scope>
    <scope>FUNCTION</scope>
    <scope>CATALYTIC ACTIVITY</scope>
    <scope>COFACTOR</scope>
    <scope>DOMAIN</scope>
    <scope>ACTIVE SITE</scope>
    <scope>MUTAGENESIS OF TRP-65; PHE-203; HIS-260 AND 271-GLU-ASN-272</scope>
    <source>
        <strain>SL1344</strain>
    </source>
</reference>
<accession>P0DUJ8</accession>
<comment type="function">
    <text evidence="1 2 6">Protein-arginine N-acetylglucosaminyltransferase effector that catalyzes the transfer of a single N-acetylglucosamine (GlcNAc) to a conserved arginine residue in the death domain of host proteins such as FADD: arginine GlcNAcylation prevents homotypic/heterotypic death domain interactions (PubMed:30327479). Also acts on host proteins without a death domain: catalyzes arginine GlcNAcylation of host small Rab1 GTPase, thereby preventing GTPase activity and leading to impaired host vesicular protein transport (PubMed:32974215). In contrast to Ssek1, not able to disrupt TNF signaling in infected cells (By similarity).</text>
</comment>
<comment type="catalytic activity">
    <reaction evidence="2 10">
        <text>L-arginyl-[protein] + UDP-N-acetyl-alpha-D-glucosamine = N(omega)-(N-acetyl-beta-D-glucosaminyl)-L-arginyl-[protein] + UDP + H(+)</text>
        <dbReference type="Rhea" id="RHEA:66632"/>
        <dbReference type="Rhea" id="RHEA-COMP:10532"/>
        <dbReference type="Rhea" id="RHEA-COMP:17079"/>
        <dbReference type="ChEBI" id="CHEBI:15378"/>
        <dbReference type="ChEBI" id="CHEBI:29965"/>
        <dbReference type="ChEBI" id="CHEBI:57705"/>
        <dbReference type="ChEBI" id="CHEBI:58223"/>
        <dbReference type="ChEBI" id="CHEBI:167322"/>
    </reaction>
    <physiologicalReaction direction="left-to-right" evidence="2 10">
        <dbReference type="Rhea" id="RHEA:66633"/>
    </physiologicalReaction>
</comment>
<comment type="cofactor">
    <cofactor evidence="2">
        <name>Mn(2+)</name>
        <dbReference type="ChEBI" id="CHEBI:29035"/>
    </cofactor>
</comment>
<comment type="activity regulation">
    <text evidence="1">Protein-arginine N-acetylglucosaminyltransferase activity is inhibited by 100066N compound (flavone analog) and 102644N compound (a substituted isoxazole).</text>
</comment>
<comment type="subcellular location">
    <subcellularLocation>
        <location evidence="1">Secreted</location>
    </subcellularLocation>
    <subcellularLocation>
        <location evidence="5 6">Host Golgi apparatus</location>
    </subcellularLocation>
    <text evidence="1">Secreted via the type III secretion system (T3SS).</text>
</comment>
<comment type="domain">
    <text evidence="2 3">Adopts a GT-A fold and acts as an inverting enzyme that converts the alpha-configuration in the UDP-N-acetyl-alpha-D-glucosamine donor to the beta configuration in the N-linked (GlcNAc) arginine product.</text>
</comment>
<comment type="disruption phenotype">
    <text evidence="4">Reduced virulence.</text>
</comment>
<comment type="similarity">
    <text evidence="8">Belongs to the glycosyltransferase NleB family.</text>
</comment>
<evidence type="ECO:0000250" key="1">
    <source>
        <dbReference type="UniProtKB" id="Q8ZNP4"/>
    </source>
</evidence>
<evidence type="ECO:0000269" key="2">
    <source>
    </source>
</evidence>
<evidence type="ECO:0000269" key="3">
    <source>
    </source>
</evidence>
<evidence type="ECO:0000269" key="4">
    <source>
    </source>
</evidence>
<evidence type="ECO:0000269" key="5">
    <source>
    </source>
</evidence>
<evidence type="ECO:0000269" key="6">
    <source>
    </source>
</evidence>
<evidence type="ECO:0000303" key="7">
    <source>
    </source>
</evidence>
<evidence type="ECO:0000305" key="8"/>
<evidence type="ECO:0000305" key="9">
    <source>
    </source>
</evidence>
<evidence type="ECO:0000305" key="10">
    <source>
    </source>
</evidence>
<evidence type="ECO:0000312" key="11">
    <source>
        <dbReference type="EMBL" id="CBW18209.1"/>
    </source>
</evidence>
<evidence type="ECO:0007744" key="12">
    <source>
        <dbReference type="PDB" id="5H61"/>
    </source>
</evidence>
<evidence type="ECO:0007744" key="13">
    <source>
        <dbReference type="PDB" id="5H62"/>
    </source>
</evidence>
<evidence type="ECO:0007744" key="14">
    <source>
        <dbReference type="PDB" id="5H63"/>
    </source>
</evidence>
<feature type="chain" id="PRO_0000452600" description="Protein-arginine N-acetylglucosaminyltransferase SseK2">
    <location>
        <begin position="1"/>
        <end position="348"/>
    </location>
</feature>
<feature type="short sequence motif" description="DXD motif" evidence="8">
    <location>
        <begin position="239"/>
        <end position="241"/>
    </location>
</feature>
<feature type="active site" description="Proton acceptor" evidence="9">
    <location>
        <position position="271"/>
    </location>
</feature>
<feature type="binding site" evidence="9 13 14">
    <location>
        <begin position="64"/>
        <end position="66"/>
    </location>
    <ligand>
        <name>UDP-N-acetyl-alpha-D-glucosamine</name>
        <dbReference type="ChEBI" id="CHEBI:57705"/>
    </ligand>
</feature>
<feature type="binding site" evidence="9 13 14">
    <location>
        <position position="88"/>
    </location>
    <ligand>
        <name>UDP-N-acetyl-alpha-D-glucosamine</name>
        <dbReference type="ChEBI" id="CHEBI:57705"/>
    </ligand>
</feature>
<feature type="binding site" evidence="9 13 14">
    <location>
        <begin position="237"/>
        <end position="240"/>
    </location>
    <ligand>
        <name>UDP-N-acetyl-alpha-D-glucosamine</name>
        <dbReference type="ChEBI" id="CHEBI:57705"/>
    </ligand>
</feature>
<feature type="binding site" evidence="2 13 14">
    <location>
        <position position="241"/>
    </location>
    <ligand>
        <name>Mn(2+)</name>
        <dbReference type="ChEBI" id="CHEBI:29035"/>
    </ligand>
</feature>
<feature type="binding site" evidence="2 13 14">
    <location>
        <position position="338"/>
    </location>
    <ligand>
        <name>Mn(2+)</name>
        <dbReference type="ChEBI" id="CHEBI:29035"/>
    </ligand>
</feature>
<feature type="binding site" evidence="9 13 14">
    <location>
        <position position="338"/>
    </location>
    <ligand>
        <name>UDP-N-acetyl-alpha-D-glucosamine</name>
        <dbReference type="ChEBI" id="CHEBI:57705"/>
    </ligand>
</feature>
<feature type="binding site" evidence="2 13 14">
    <location>
        <position position="340"/>
    </location>
    <ligand>
        <name>Mn(2+)</name>
        <dbReference type="ChEBI" id="CHEBI:29035"/>
    </ligand>
</feature>
<feature type="binding site" evidence="9 13 14">
    <location>
        <position position="340"/>
    </location>
    <ligand>
        <name>UDP-N-acetyl-alpha-D-glucosamine</name>
        <dbReference type="ChEBI" id="CHEBI:57705"/>
    </ligand>
</feature>
<feature type="binding site" evidence="9 13 14">
    <location>
        <begin position="345"/>
        <end position="348"/>
    </location>
    <ligand>
        <name>UDP-N-acetyl-alpha-D-glucosamine</name>
        <dbReference type="ChEBI" id="CHEBI:57705"/>
    </ligand>
</feature>
<feature type="mutagenesis site" description="Abolished binding to UDP-N-acetyl-alpha-D-glucosamine." evidence="2">
    <original>W</original>
    <variation>A</variation>
    <location>
        <position position="65"/>
    </location>
</feature>
<feature type="mutagenesis site" description="Reduced binding to UDP-N-acetyl-alpha-D-glucosamine." evidence="2">
    <original>F</original>
    <variation>A</variation>
    <location>
        <position position="203"/>
    </location>
</feature>
<feature type="mutagenesis site" description="Abolished protein-arginine N-acetylglucosaminyltransferase activity." evidence="6">
    <original>DAD</original>
    <variation>AAA</variation>
    <location>
        <begin position="239"/>
        <end position="241"/>
    </location>
</feature>
<feature type="mutagenesis site" description="Abolished protein-arginine N-acetylglucosaminyltransferase activity; when associated with A-255 and 271-A-A-272." evidence="2">
    <original>H</original>
    <variation>A</variation>
    <location>
        <position position="260"/>
    </location>
</feature>
<feature type="mutagenesis site" description="Abolished protein-arginine N-acetylglucosaminyltransferase activity; when associated with A-260." evidence="2">
    <original>EN</original>
    <variation>AA</variation>
    <location>
        <begin position="271"/>
        <end position="272"/>
    </location>
</feature>